<reference key="1">
    <citation type="journal article" date="2006" name="Virology">
        <title>His1 and His2 are distantly related, spindle-shaped haloviruses belonging to the novel virus group, Salterprovirus.</title>
        <authorList>
            <person name="Bath C."/>
            <person name="Cukalac T."/>
            <person name="Porter K."/>
            <person name="Dyall-Smith M.L."/>
        </authorList>
    </citation>
    <scope>NUCLEOTIDE SEQUENCE [GENOMIC DNA]</scope>
</reference>
<protein>
    <recommendedName>
        <fullName>Uncharacterized protein ORF14</fullName>
    </recommendedName>
</protein>
<proteinExistence type="predicted"/>
<name>Y014_HIS1I</name>
<feature type="chain" id="PRO_0000384882" description="Uncharacterized protein ORF14">
    <location>
        <begin position="1"/>
        <end position="50"/>
    </location>
</feature>
<keyword id="KW-1185">Reference proteome</keyword>
<accession>Q25BI1</accession>
<organism>
    <name type="scientific">His1 virus (isolate Australia/Victoria)</name>
    <name type="common">His1V</name>
    <name type="synonym">Haloarcula hispanica virus 1</name>
    <dbReference type="NCBI Taxonomy" id="654912"/>
    <lineage>
        <taxon>Viruses</taxon>
        <taxon>Viruses incertae sedis</taxon>
        <taxon>Halspiviridae</taxon>
        <taxon>Salterprovirus</taxon>
        <taxon>Salterprovirus His1</taxon>
    </lineage>
</organism>
<sequence length="50" mass="5887">MEYRYYCHSSFRFLKGGDGETGRWQGQFATLDSFSHYRLSLSLLAACSRW</sequence>
<dbReference type="EMBL" id="AF191796">
    <property type="protein sequence ID" value="AAQ13729.1"/>
    <property type="molecule type" value="Genomic_DNA"/>
</dbReference>
<dbReference type="RefSeq" id="YP_529526.1">
    <property type="nucleotide sequence ID" value="NC_007914.1"/>
</dbReference>
<dbReference type="KEGG" id="vg:5142408"/>
<dbReference type="Proteomes" id="UP000007024">
    <property type="component" value="Segment"/>
</dbReference>
<organismHost>
    <name type="scientific">Haloarcula hispanica</name>
    <dbReference type="NCBI Taxonomy" id="51589"/>
</organismHost>
<gene>
    <name type="ORF">ORF14</name>
</gene>